<gene>
    <name evidence="6" type="primary">Coq9</name>
</gene>
<reference key="1">
    <citation type="journal article" date="2004" name="Nature">
        <title>Genome sequence of the Brown Norway rat yields insights into mammalian evolution.</title>
        <authorList>
            <person name="Gibbs R.A."/>
            <person name="Weinstock G.M."/>
            <person name="Metzker M.L."/>
            <person name="Muzny D.M."/>
            <person name="Sodergren E.J."/>
            <person name="Scherer S."/>
            <person name="Scott G."/>
            <person name="Steffen D."/>
            <person name="Worley K.C."/>
            <person name="Burch P.E."/>
            <person name="Okwuonu G."/>
            <person name="Hines S."/>
            <person name="Lewis L."/>
            <person name="Deramo C."/>
            <person name="Delgado O."/>
            <person name="Dugan-Rocha S."/>
            <person name="Miner G."/>
            <person name="Morgan M."/>
            <person name="Hawes A."/>
            <person name="Gill R."/>
            <person name="Holt R.A."/>
            <person name="Adams M.D."/>
            <person name="Amanatides P.G."/>
            <person name="Baden-Tillson H."/>
            <person name="Barnstead M."/>
            <person name="Chin S."/>
            <person name="Evans C.A."/>
            <person name="Ferriera S."/>
            <person name="Fosler C."/>
            <person name="Glodek A."/>
            <person name="Gu Z."/>
            <person name="Jennings D."/>
            <person name="Kraft C.L."/>
            <person name="Nguyen T."/>
            <person name="Pfannkoch C.M."/>
            <person name="Sitter C."/>
            <person name="Sutton G.G."/>
            <person name="Venter J.C."/>
            <person name="Woodage T."/>
            <person name="Smith D."/>
            <person name="Lee H.-M."/>
            <person name="Gustafson E."/>
            <person name="Cahill P."/>
            <person name="Kana A."/>
            <person name="Doucette-Stamm L."/>
            <person name="Weinstock K."/>
            <person name="Fechtel K."/>
            <person name="Weiss R.B."/>
            <person name="Dunn D.M."/>
            <person name="Green E.D."/>
            <person name="Blakesley R.W."/>
            <person name="Bouffard G.G."/>
            <person name="De Jong P.J."/>
            <person name="Osoegawa K."/>
            <person name="Zhu B."/>
            <person name="Marra M."/>
            <person name="Schein J."/>
            <person name="Bosdet I."/>
            <person name="Fjell C."/>
            <person name="Jones S."/>
            <person name="Krzywinski M."/>
            <person name="Mathewson C."/>
            <person name="Siddiqui A."/>
            <person name="Wye N."/>
            <person name="McPherson J."/>
            <person name="Zhao S."/>
            <person name="Fraser C.M."/>
            <person name="Shetty J."/>
            <person name="Shatsman S."/>
            <person name="Geer K."/>
            <person name="Chen Y."/>
            <person name="Abramzon S."/>
            <person name="Nierman W.C."/>
            <person name="Havlak P.H."/>
            <person name="Chen R."/>
            <person name="Durbin K.J."/>
            <person name="Egan A."/>
            <person name="Ren Y."/>
            <person name="Song X.-Z."/>
            <person name="Li B."/>
            <person name="Liu Y."/>
            <person name="Qin X."/>
            <person name="Cawley S."/>
            <person name="Cooney A.J."/>
            <person name="D'Souza L.M."/>
            <person name="Martin K."/>
            <person name="Wu J.Q."/>
            <person name="Gonzalez-Garay M.L."/>
            <person name="Jackson A.R."/>
            <person name="Kalafus K.J."/>
            <person name="McLeod M.P."/>
            <person name="Milosavljevic A."/>
            <person name="Virk D."/>
            <person name="Volkov A."/>
            <person name="Wheeler D.A."/>
            <person name="Zhang Z."/>
            <person name="Bailey J.A."/>
            <person name="Eichler E.E."/>
            <person name="Tuzun E."/>
            <person name="Birney E."/>
            <person name="Mongin E."/>
            <person name="Ureta-Vidal A."/>
            <person name="Woodwark C."/>
            <person name="Zdobnov E."/>
            <person name="Bork P."/>
            <person name="Suyama M."/>
            <person name="Torrents D."/>
            <person name="Alexandersson M."/>
            <person name="Trask B.J."/>
            <person name="Young J.M."/>
            <person name="Huang H."/>
            <person name="Wang H."/>
            <person name="Xing H."/>
            <person name="Daniels S."/>
            <person name="Gietzen D."/>
            <person name="Schmidt J."/>
            <person name="Stevens K."/>
            <person name="Vitt U."/>
            <person name="Wingrove J."/>
            <person name="Camara F."/>
            <person name="Mar Alba M."/>
            <person name="Abril J.F."/>
            <person name="Guigo R."/>
            <person name="Smit A."/>
            <person name="Dubchak I."/>
            <person name="Rubin E.M."/>
            <person name="Couronne O."/>
            <person name="Poliakov A."/>
            <person name="Huebner N."/>
            <person name="Ganten D."/>
            <person name="Goesele C."/>
            <person name="Hummel O."/>
            <person name="Kreitler T."/>
            <person name="Lee Y.-A."/>
            <person name="Monti J."/>
            <person name="Schulz H."/>
            <person name="Zimdahl H."/>
            <person name="Himmelbauer H."/>
            <person name="Lehrach H."/>
            <person name="Jacob H.J."/>
            <person name="Bromberg S."/>
            <person name="Gullings-Handley J."/>
            <person name="Jensen-Seaman M.I."/>
            <person name="Kwitek A.E."/>
            <person name="Lazar J."/>
            <person name="Pasko D."/>
            <person name="Tonellato P.J."/>
            <person name="Twigger S."/>
            <person name="Ponting C.P."/>
            <person name="Duarte J.M."/>
            <person name="Rice S."/>
            <person name="Goodstadt L."/>
            <person name="Beatson S.A."/>
            <person name="Emes R.D."/>
            <person name="Winter E.E."/>
            <person name="Webber C."/>
            <person name="Brandt P."/>
            <person name="Nyakatura G."/>
            <person name="Adetobi M."/>
            <person name="Chiaromonte F."/>
            <person name="Elnitski L."/>
            <person name="Eswara P."/>
            <person name="Hardison R.C."/>
            <person name="Hou M."/>
            <person name="Kolbe D."/>
            <person name="Makova K."/>
            <person name="Miller W."/>
            <person name="Nekrutenko A."/>
            <person name="Riemer C."/>
            <person name="Schwartz S."/>
            <person name="Taylor J."/>
            <person name="Yang S."/>
            <person name="Zhang Y."/>
            <person name="Lindpaintner K."/>
            <person name="Andrews T.D."/>
            <person name="Caccamo M."/>
            <person name="Clamp M."/>
            <person name="Clarke L."/>
            <person name="Curwen V."/>
            <person name="Durbin R.M."/>
            <person name="Eyras E."/>
            <person name="Searle S.M."/>
            <person name="Cooper G.M."/>
            <person name="Batzoglou S."/>
            <person name="Brudno M."/>
            <person name="Sidow A."/>
            <person name="Stone E.A."/>
            <person name="Payseur B.A."/>
            <person name="Bourque G."/>
            <person name="Lopez-Otin C."/>
            <person name="Puente X.S."/>
            <person name="Chakrabarti K."/>
            <person name="Chatterji S."/>
            <person name="Dewey C."/>
            <person name="Pachter L."/>
            <person name="Bray N."/>
            <person name="Yap V.B."/>
            <person name="Caspi A."/>
            <person name="Tesler G."/>
            <person name="Pevzner P.A."/>
            <person name="Haussler D."/>
            <person name="Roskin K.M."/>
            <person name="Baertsch R."/>
            <person name="Clawson H."/>
            <person name="Furey T.S."/>
            <person name="Hinrichs A.S."/>
            <person name="Karolchik D."/>
            <person name="Kent W.J."/>
            <person name="Rosenbloom K.R."/>
            <person name="Trumbower H."/>
            <person name="Weirauch M."/>
            <person name="Cooper D.N."/>
            <person name="Stenson P.D."/>
            <person name="Ma B."/>
            <person name="Brent M."/>
            <person name="Arumugam M."/>
            <person name="Shteynberg D."/>
            <person name="Copley R.R."/>
            <person name="Taylor M.S."/>
            <person name="Riethman H."/>
            <person name="Mudunuri U."/>
            <person name="Peterson J."/>
            <person name="Guyer M."/>
            <person name="Felsenfeld A."/>
            <person name="Old S."/>
            <person name="Mockrin S."/>
            <person name="Collins F.S."/>
        </authorList>
    </citation>
    <scope>NUCLEOTIDE SEQUENCE [LARGE SCALE GENOMIC DNA]</scope>
    <source>
        <strain>Brown Norway</strain>
    </source>
</reference>
<reference key="2">
    <citation type="journal article" date="2004" name="Genome Res.">
        <title>The status, quality, and expansion of the NIH full-length cDNA project: the Mammalian Gene Collection (MGC).</title>
        <authorList>
            <consortium name="The MGC Project Team"/>
        </authorList>
    </citation>
    <scope>NUCLEOTIDE SEQUENCE [LARGE SCALE MRNA]</scope>
    <source>
        <tissue>Brain</tissue>
        <tissue>Kidney</tissue>
    </source>
</reference>
<reference key="3">
    <citation type="journal article" date="2012" name="Nat. Commun.">
        <title>Quantitative maps of protein phosphorylation sites across 14 different rat organs and tissues.</title>
        <authorList>
            <person name="Lundby A."/>
            <person name="Secher A."/>
            <person name="Lage K."/>
            <person name="Nordsborg N.B."/>
            <person name="Dmytriyev A."/>
            <person name="Lundby C."/>
            <person name="Olsen J.V."/>
        </authorList>
    </citation>
    <scope>PHOSPHORYLATION [LARGE SCALE ANALYSIS] AT SER-80</scope>
    <scope>IDENTIFICATION BY MASS SPECTROMETRY [LARGE SCALE ANALYSIS]</scope>
</reference>
<name>COQ9_RAT</name>
<accession>Q68FT1</accession>
<accession>A1L109</accession>
<protein>
    <recommendedName>
        <fullName evidence="5">Ubiquinone biosynthesis protein COQ9, mitochondrial</fullName>
    </recommendedName>
</protein>
<dbReference type="EMBL" id="AABR03113798">
    <property type="status" value="NOT_ANNOTATED_CDS"/>
    <property type="molecule type" value="Genomic_DNA"/>
</dbReference>
<dbReference type="EMBL" id="AABR03113818">
    <property type="status" value="NOT_ANNOTATED_CDS"/>
    <property type="molecule type" value="Genomic_DNA"/>
</dbReference>
<dbReference type="EMBL" id="BC079370">
    <property type="protein sequence ID" value="AAH79370.1"/>
    <property type="molecule type" value="mRNA"/>
</dbReference>
<dbReference type="EMBL" id="BC104702">
    <property type="protein sequence ID" value="AAI04703.1"/>
    <property type="molecule type" value="mRNA"/>
</dbReference>
<dbReference type="EMBL" id="BC127449">
    <property type="protein sequence ID" value="AAI27450.1"/>
    <property type="molecule type" value="mRNA"/>
</dbReference>
<dbReference type="RefSeq" id="NP_001030334.1">
    <property type="nucleotide sequence ID" value="NM_001035257.1"/>
</dbReference>
<dbReference type="SMR" id="Q68FT1"/>
<dbReference type="FunCoup" id="Q68FT1">
    <property type="interactions" value="2488"/>
</dbReference>
<dbReference type="STRING" id="10116.ENSRNOP00000021716"/>
<dbReference type="iPTMnet" id="Q68FT1"/>
<dbReference type="PhosphoSitePlus" id="Q68FT1"/>
<dbReference type="jPOST" id="Q68FT1"/>
<dbReference type="PaxDb" id="10116-ENSRNOP00000021716"/>
<dbReference type="Ensembl" id="ENSRNOT00000094912.1">
    <property type="protein sequence ID" value="ENSRNOP00000078182.1"/>
    <property type="gene ID" value="ENSRNOG00000016190.7"/>
</dbReference>
<dbReference type="GeneID" id="498909"/>
<dbReference type="KEGG" id="rno:498909"/>
<dbReference type="UCSC" id="RGD:1586040">
    <property type="organism name" value="rat"/>
</dbReference>
<dbReference type="AGR" id="RGD:1586040"/>
<dbReference type="CTD" id="57017"/>
<dbReference type="RGD" id="1586040">
    <property type="gene designation" value="Coq9"/>
</dbReference>
<dbReference type="eggNOG" id="KOG2969">
    <property type="taxonomic scope" value="Eukaryota"/>
</dbReference>
<dbReference type="GeneTree" id="ENSGT00390000009328"/>
<dbReference type="HOGENOM" id="CLU_057411_0_2_1"/>
<dbReference type="InParanoid" id="Q68FT1"/>
<dbReference type="OMA" id="CAGFGWN"/>
<dbReference type="OrthoDB" id="619536at2759"/>
<dbReference type="PhylomeDB" id="Q68FT1"/>
<dbReference type="TreeFam" id="TF324653"/>
<dbReference type="Reactome" id="R-RNO-2142789">
    <property type="pathway name" value="Ubiquinol biosynthesis"/>
</dbReference>
<dbReference type="UniPathway" id="UPA00232"/>
<dbReference type="PRO" id="PR:Q68FT1"/>
<dbReference type="Proteomes" id="UP000002494">
    <property type="component" value="Chromosome 19"/>
</dbReference>
<dbReference type="Bgee" id="ENSRNOG00000016190">
    <property type="expression patterns" value="Expressed in skeletal muscle tissue and 20 other cell types or tissues"/>
</dbReference>
<dbReference type="GO" id="GO:0005743">
    <property type="term" value="C:mitochondrial inner membrane"/>
    <property type="evidence" value="ECO:0000266"/>
    <property type="project" value="RGD"/>
</dbReference>
<dbReference type="GO" id="GO:0110142">
    <property type="term" value="C:ubiquinone biosynthesis complex"/>
    <property type="evidence" value="ECO:0000266"/>
    <property type="project" value="RGD"/>
</dbReference>
<dbReference type="GO" id="GO:0008047">
    <property type="term" value="F:enzyme activator activity"/>
    <property type="evidence" value="ECO:0007669"/>
    <property type="project" value="Ensembl"/>
</dbReference>
<dbReference type="GO" id="GO:0019840">
    <property type="term" value="F:isoprenoid binding"/>
    <property type="evidence" value="ECO:0000250"/>
    <property type="project" value="UniProtKB"/>
</dbReference>
<dbReference type="GO" id="GO:0008289">
    <property type="term" value="F:lipid binding"/>
    <property type="evidence" value="ECO:0000250"/>
    <property type="project" value="UniProtKB"/>
</dbReference>
<dbReference type="GO" id="GO:0042803">
    <property type="term" value="F:protein homodimerization activity"/>
    <property type="evidence" value="ECO:0000250"/>
    <property type="project" value="UniProtKB"/>
</dbReference>
<dbReference type="GO" id="GO:0006120">
    <property type="term" value="P:mitochondrial electron transport, NADH to ubiquinone"/>
    <property type="evidence" value="ECO:0000266"/>
    <property type="project" value="RGD"/>
</dbReference>
<dbReference type="GO" id="GO:0006744">
    <property type="term" value="P:ubiquinone biosynthetic process"/>
    <property type="evidence" value="ECO:0000250"/>
    <property type="project" value="UniProtKB"/>
</dbReference>
<dbReference type="FunFam" id="1.10.357.10:FF:000004">
    <property type="entry name" value="Ubiquinone biosynthesis protein COQ9, mitochondrial"/>
    <property type="match status" value="1"/>
</dbReference>
<dbReference type="Gene3D" id="1.10.357.10">
    <property type="entry name" value="Tetracycline Repressor, domain 2"/>
    <property type="match status" value="1"/>
</dbReference>
<dbReference type="InterPro" id="IPR013718">
    <property type="entry name" value="COQ9_C"/>
</dbReference>
<dbReference type="InterPro" id="IPR048674">
    <property type="entry name" value="COQ9_HTH"/>
</dbReference>
<dbReference type="InterPro" id="IPR012762">
    <property type="entry name" value="Ubiq_biosynth_COQ9"/>
</dbReference>
<dbReference type="NCBIfam" id="TIGR02396">
    <property type="entry name" value="diverge_rpsU"/>
    <property type="match status" value="1"/>
</dbReference>
<dbReference type="PANTHER" id="PTHR21427">
    <property type="entry name" value="UBIQUINONE BIOSYNTHESIS PROTEIN COQ9, MITOCHONDRIAL"/>
    <property type="match status" value="1"/>
</dbReference>
<dbReference type="PANTHER" id="PTHR21427:SF19">
    <property type="entry name" value="UBIQUINONE BIOSYNTHESIS PROTEIN COQ9, MITOCHONDRIAL"/>
    <property type="match status" value="1"/>
</dbReference>
<dbReference type="Pfam" id="PF08511">
    <property type="entry name" value="COQ9"/>
    <property type="match status" value="1"/>
</dbReference>
<dbReference type="Pfam" id="PF21392">
    <property type="entry name" value="COQ9_N"/>
    <property type="match status" value="1"/>
</dbReference>
<comment type="function">
    <text evidence="1">Membrane-associated protein that warps the membrane surface to access and bind aromatic isoprenes with high specificity, including ubiquinone (CoQ) isoprene intermediates and presents them directly to COQ7, therefore facilitating the COQ7-mediated hydroxylase step. Participates in the biosynthesis of coenzyme Q, also named ubiquinone, an essential lipid-soluble electron transporter for aerobic cellular respiration.</text>
</comment>
<comment type="pathway">
    <text evidence="2">Cofactor biosynthesis; ubiquinone biosynthesis.</text>
</comment>
<comment type="subunit">
    <text evidence="1">Homodimer. Heterodimer; two heterodimers of COQ7:COQ9 come together on the same side of the lipid pseudo-bilayer and form a curved tetramer with a hydrophobic surface suitable for membrane interaction. These two tetramers assemble into a soluble octamer with a pseudo-bilayer of lipids captured within. Interacts with COQ7; this interaction allows ubiquinone (CoQ) isoprene intermediates presentation to COQ7 and facilitates the COQ7-mediated hydroxylase step.</text>
</comment>
<comment type="subcellular location">
    <subcellularLocation>
        <location evidence="2">Mitochondrion</location>
    </subcellularLocation>
    <text evidence="1">Associates with cardiolipin-rich membranes which leads to the lipid bilayer deformation and then accessing to membrane-bound lipids.</text>
</comment>
<comment type="domain">
    <text evidence="1">Structurally similar to the bacterial FadR protein (fatty acid metabolism regulator protein).</text>
</comment>
<comment type="PTM">
    <text evidence="1">In response to mitochondrial stress, the precursor protein is ubiquitinated by the SIFI complex in the cytoplasm before mitochondrial import, leading to its degradation. Within the SIFI complex, UBR4 initiates ubiquitin chain that are further elongated or branched by KCMF1.</text>
</comment>
<comment type="similarity">
    <text evidence="5">Belongs to the COQ9 family.</text>
</comment>
<proteinExistence type="evidence at protein level"/>
<sequence length="312" mass="35146">MAATAAVSGVLRRLGWRLLQLRCLPVARCQSPLMPRAFHTAVGFRSSEEQRQQPPHSSQQHSETQGPEFSRPPPRYTDQSGEEEEDYESEEQIQHRILTAALEFVPDHGWTAEAIAEGAQSLGLSSAAASMFGSDGSELILHFVTQCNARLNHVLEEEQKLVQLGQAEKRKTDQFLRDAVETRLRMLIPYIEHWPRALSILLLPQNIPPSLSLLTSMVDDMWHYAGDQSTDFNWYTRRAVLAGIYNTTELVMMQDSSPDFEDTWRFLDNRINDAMNMGHTAKQVKSTGEALVQGLMGAAVTLKNLTGLNQRR</sequence>
<evidence type="ECO:0000250" key="1">
    <source>
        <dbReference type="UniProtKB" id="O75208"/>
    </source>
</evidence>
<evidence type="ECO:0000250" key="2">
    <source>
        <dbReference type="UniProtKB" id="Q8K1Z0"/>
    </source>
</evidence>
<evidence type="ECO:0000255" key="3"/>
<evidence type="ECO:0000256" key="4">
    <source>
        <dbReference type="SAM" id="MobiDB-lite"/>
    </source>
</evidence>
<evidence type="ECO:0000305" key="5"/>
<evidence type="ECO:0000312" key="6">
    <source>
        <dbReference type="RGD" id="1586040"/>
    </source>
</evidence>
<evidence type="ECO:0007744" key="7">
    <source>
    </source>
</evidence>
<organism>
    <name type="scientific">Rattus norvegicus</name>
    <name type="common">Rat</name>
    <dbReference type="NCBI Taxonomy" id="10116"/>
    <lineage>
        <taxon>Eukaryota</taxon>
        <taxon>Metazoa</taxon>
        <taxon>Chordata</taxon>
        <taxon>Craniata</taxon>
        <taxon>Vertebrata</taxon>
        <taxon>Euteleostomi</taxon>
        <taxon>Mammalia</taxon>
        <taxon>Eutheria</taxon>
        <taxon>Euarchontoglires</taxon>
        <taxon>Glires</taxon>
        <taxon>Rodentia</taxon>
        <taxon>Myomorpha</taxon>
        <taxon>Muroidea</taxon>
        <taxon>Muridae</taxon>
        <taxon>Murinae</taxon>
        <taxon>Rattus</taxon>
    </lineage>
</organism>
<keyword id="KW-0007">Acetylation</keyword>
<keyword id="KW-0446">Lipid-binding</keyword>
<keyword id="KW-0496">Mitochondrion</keyword>
<keyword id="KW-0597">Phosphoprotein</keyword>
<keyword id="KW-1185">Reference proteome</keyword>
<keyword id="KW-0809">Transit peptide</keyword>
<keyword id="KW-0831">Ubiquinone biosynthesis</keyword>
<keyword id="KW-0832">Ubl conjugation</keyword>
<feature type="transit peptide" description="Mitochondrion" evidence="3">
    <location>
        <begin position="1"/>
        <end position="45"/>
    </location>
</feature>
<feature type="chain" id="PRO_0000228639" description="Ubiquinone biosynthesis protein COQ9, mitochondrial">
    <location>
        <begin position="46"/>
        <end position="312"/>
    </location>
</feature>
<feature type="region of interest" description="Disordered" evidence="4">
    <location>
        <begin position="43"/>
        <end position="92"/>
    </location>
</feature>
<feature type="short sequence motif" description="SIFI-degron" evidence="1">
    <location>
        <begin position="17"/>
        <end position="32"/>
    </location>
</feature>
<feature type="compositionally biased region" description="Low complexity" evidence="4">
    <location>
        <begin position="52"/>
        <end position="63"/>
    </location>
</feature>
<feature type="compositionally biased region" description="Acidic residues" evidence="4">
    <location>
        <begin position="80"/>
        <end position="91"/>
    </location>
</feature>
<feature type="binding site" evidence="1">
    <location>
        <position position="238"/>
    </location>
    <ligand>
        <name>a 1,2-diacylglycero-3-phosphoethanolamine</name>
        <dbReference type="ChEBI" id="CHEBI:57613"/>
    </ligand>
</feature>
<feature type="modified residue" description="Phosphoserine" evidence="7">
    <location>
        <position position="80"/>
    </location>
</feature>
<feature type="modified residue" description="N6-acetyllysine" evidence="2">
    <location>
        <position position="169"/>
    </location>
</feature>